<organism>
    <name type="scientific">Blochmanniella floridana</name>
    <dbReference type="NCBI Taxonomy" id="203907"/>
    <lineage>
        <taxon>Bacteria</taxon>
        <taxon>Pseudomonadati</taxon>
        <taxon>Pseudomonadota</taxon>
        <taxon>Gammaproteobacteria</taxon>
        <taxon>Enterobacterales</taxon>
        <taxon>Enterobacteriaceae</taxon>
        <taxon>ant endosymbionts</taxon>
        <taxon>Candidatus Blochmanniella</taxon>
    </lineage>
</organism>
<accession>Q7VR66</accession>
<comment type="catalytic activity">
    <reaction evidence="1">
        <text>tRNA(Phe) + L-phenylalanine + ATP = L-phenylalanyl-tRNA(Phe) + AMP + diphosphate + H(+)</text>
        <dbReference type="Rhea" id="RHEA:19413"/>
        <dbReference type="Rhea" id="RHEA-COMP:9668"/>
        <dbReference type="Rhea" id="RHEA-COMP:9699"/>
        <dbReference type="ChEBI" id="CHEBI:15378"/>
        <dbReference type="ChEBI" id="CHEBI:30616"/>
        <dbReference type="ChEBI" id="CHEBI:33019"/>
        <dbReference type="ChEBI" id="CHEBI:58095"/>
        <dbReference type="ChEBI" id="CHEBI:78442"/>
        <dbReference type="ChEBI" id="CHEBI:78531"/>
        <dbReference type="ChEBI" id="CHEBI:456215"/>
        <dbReference type="EC" id="6.1.1.20"/>
    </reaction>
</comment>
<comment type="cofactor">
    <cofactor evidence="1">
        <name>Mg(2+)</name>
        <dbReference type="ChEBI" id="CHEBI:18420"/>
    </cofactor>
    <text evidence="1">Binds 2 magnesium ions per tetramer.</text>
</comment>
<comment type="subunit">
    <text evidence="1">Tetramer of two alpha and two beta subunits.</text>
</comment>
<comment type="subcellular location">
    <subcellularLocation>
        <location evidence="1">Cytoplasm</location>
    </subcellularLocation>
</comment>
<comment type="similarity">
    <text evidence="1">Belongs to the phenylalanyl-tRNA synthetase beta subunit family. Type 1 subfamily.</text>
</comment>
<comment type="caution">
    <text evidence="2">Lacks 2 conserved residues that bind magnesium; the aspartate residue in position 464 is replaced by an asparagine and the glutamate residue in position 467 is replaced by a serine residue.</text>
</comment>
<sequence length="803" mass="91364">MKFSESWIREWVNPPIDHDQLIDQFTLAGLNVEESRKLNSNKFYGIVIAKIIECQVHPSLADTWIMTVNSGGGNIINIITNNMNYNKNTKVVVANIGAILPNGNIIKQINIQGRKSEGVLCTFSMLGLNYYTQKGIIELPIDAPIGCNFYDYLHFNDNIIDINITPNRGDCLSVIGLSREIAAINQCKLKKINIKSNVPNILDTIPIIIETPHDCPKFLGKVLKNIDITIPTPLKIQEKLIRCGIQPINIITDIANYVLLELGQPVRIFDYEKIDKNIIYVRFSKPGETLTLSENNINIKLFSKTLVISDVRKPLAIAGVITGNQSSVSCSTHNIFLKVAFFNPLTIINQYKLYNLYTSSVVRYEKGIDPDISELALNYATSLLIKYCHGKAGPTINIISHNHLPKIKIIKLHRSKLNMILGFYIPDQKIINILTNLGFQVETQGHNWIVSTPSWRFDINIEENVISEIIRIYGYNHIPKIPAKISLNQTVQCIPNQVISLSKSKTVLIARGYQEIITYSFVDPNIQKLLHPQCIPLTLMNPISTNMSVMRLSLWTGLIQTMLYNQNRQHKNIKLFESGICFIPKNSHSKQVSQQLRLSGIRSGLRHYEHWDIHTSLTDFYDIKGDVESILYLFNKKNQNNNIHFKSCTYPALHPGQSAEIYLNDIFLGYVGVIHPMIQYKLRIHSNVLVFELIWDSIVNIKSQKIIDISKFPKNYRDISLIIPTHISASSVIETCKKIGIINLTEVKLIDVYTGRNIPTNFKSLTIKLTLQSKTHTLKEQEIKEIIIICTTTLKKHFNAIFR</sequence>
<reference key="1">
    <citation type="journal article" date="2003" name="Proc. Natl. Acad. Sci. U.S.A.">
        <title>The genome sequence of Blochmannia floridanus: comparative analysis of reduced genomes.</title>
        <authorList>
            <person name="Gil R."/>
            <person name="Silva F.J."/>
            <person name="Zientz E."/>
            <person name="Delmotte F."/>
            <person name="Gonzalez-Candelas F."/>
            <person name="Latorre A."/>
            <person name="Rausell C."/>
            <person name="Kamerbeek J."/>
            <person name="Gadau J."/>
            <person name="Hoelldobler B."/>
            <person name="van Ham R.C.H.J."/>
            <person name="Gross R."/>
            <person name="Moya A."/>
        </authorList>
    </citation>
    <scope>NUCLEOTIDE SEQUENCE [LARGE SCALE GENOMIC DNA]</scope>
</reference>
<name>SYFB_BLOFL</name>
<dbReference type="EC" id="6.1.1.20" evidence="1"/>
<dbReference type="EMBL" id="BX248583">
    <property type="protein sequence ID" value="CAD83423.1"/>
    <property type="molecule type" value="Genomic_DNA"/>
</dbReference>
<dbReference type="SMR" id="Q7VR66"/>
<dbReference type="STRING" id="203907.Bfl356"/>
<dbReference type="KEGG" id="bfl:Bfl356"/>
<dbReference type="eggNOG" id="COG0072">
    <property type="taxonomic scope" value="Bacteria"/>
</dbReference>
<dbReference type="HOGENOM" id="CLU_016891_0_0_6"/>
<dbReference type="OrthoDB" id="9805455at2"/>
<dbReference type="Proteomes" id="UP000002192">
    <property type="component" value="Chromosome"/>
</dbReference>
<dbReference type="GO" id="GO:0009328">
    <property type="term" value="C:phenylalanine-tRNA ligase complex"/>
    <property type="evidence" value="ECO:0007669"/>
    <property type="project" value="TreeGrafter"/>
</dbReference>
<dbReference type="GO" id="GO:0005524">
    <property type="term" value="F:ATP binding"/>
    <property type="evidence" value="ECO:0007669"/>
    <property type="project" value="UniProtKB-UniRule"/>
</dbReference>
<dbReference type="GO" id="GO:0000287">
    <property type="term" value="F:magnesium ion binding"/>
    <property type="evidence" value="ECO:0007669"/>
    <property type="project" value="UniProtKB-UniRule"/>
</dbReference>
<dbReference type="GO" id="GO:0004826">
    <property type="term" value="F:phenylalanine-tRNA ligase activity"/>
    <property type="evidence" value="ECO:0007669"/>
    <property type="project" value="UniProtKB-UniRule"/>
</dbReference>
<dbReference type="GO" id="GO:0000049">
    <property type="term" value="F:tRNA binding"/>
    <property type="evidence" value="ECO:0007669"/>
    <property type="project" value="UniProtKB-KW"/>
</dbReference>
<dbReference type="GO" id="GO:0006432">
    <property type="term" value="P:phenylalanyl-tRNA aminoacylation"/>
    <property type="evidence" value="ECO:0007669"/>
    <property type="project" value="UniProtKB-UniRule"/>
</dbReference>
<dbReference type="CDD" id="cd00769">
    <property type="entry name" value="PheRS_beta_core"/>
    <property type="match status" value="1"/>
</dbReference>
<dbReference type="CDD" id="cd02796">
    <property type="entry name" value="tRNA_bind_bactPheRS"/>
    <property type="match status" value="1"/>
</dbReference>
<dbReference type="FunFam" id="3.30.56.10:FF:000002">
    <property type="entry name" value="Phenylalanine--tRNA ligase beta subunit"/>
    <property type="match status" value="1"/>
</dbReference>
<dbReference type="FunFam" id="3.30.930.10:FF:000022">
    <property type="entry name" value="Phenylalanine--tRNA ligase beta subunit"/>
    <property type="match status" value="1"/>
</dbReference>
<dbReference type="Gene3D" id="3.30.56.10">
    <property type="match status" value="2"/>
</dbReference>
<dbReference type="Gene3D" id="3.30.930.10">
    <property type="entry name" value="Bira Bifunctional Protein, Domain 2"/>
    <property type="match status" value="1"/>
</dbReference>
<dbReference type="Gene3D" id="3.30.70.380">
    <property type="entry name" value="Ferrodoxin-fold anticodon-binding domain"/>
    <property type="match status" value="1"/>
</dbReference>
<dbReference type="Gene3D" id="2.40.50.140">
    <property type="entry name" value="Nucleic acid-binding proteins"/>
    <property type="match status" value="1"/>
</dbReference>
<dbReference type="Gene3D" id="3.50.40.10">
    <property type="entry name" value="Phenylalanyl-trna Synthetase, Chain B, domain 3"/>
    <property type="match status" value="1"/>
</dbReference>
<dbReference type="HAMAP" id="MF_00283">
    <property type="entry name" value="Phe_tRNA_synth_beta1"/>
    <property type="match status" value="1"/>
</dbReference>
<dbReference type="InterPro" id="IPR045864">
    <property type="entry name" value="aa-tRNA-synth_II/BPL/LPL"/>
</dbReference>
<dbReference type="InterPro" id="IPR005146">
    <property type="entry name" value="B3/B4_tRNA-bd"/>
</dbReference>
<dbReference type="InterPro" id="IPR009061">
    <property type="entry name" value="DNA-bd_dom_put_sf"/>
</dbReference>
<dbReference type="InterPro" id="IPR005121">
    <property type="entry name" value="Fdx_antiC-bd"/>
</dbReference>
<dbReference type="InterPro" id="IPR036690">
    <property type="entry name" value="Fdx_antiC-bd_sf"/>
</dbReference>
<dbReference type="InterPro" id="IPR012340">
    <property type="entry name" value="NA-bd_OB-fold"/>
</dbReference>
<dbReference type="InterPro" id="IPR045060">
    <property type="entry name" value="Phe-tRNA-ligase_IIc_bsu"/>
</dbReference>
<dbReference type="InterPro" id="IPR004532">
    <property type="entry name" value="Phe-tRNA-ligase_IIc_bsu_bact"/>
</dbReference>
<dbReference type="InterPro" id="IPR020825">
    <property type="entry name" value="Phe-tRNA_synthase-like_B3/B4"/>
</dbReference>
<dbReference type="InterPro" id="IPR041616">
    <property type="entry name" value="PheRS_beta_core"/>
</dbReference>
<dbReference type="InterPro" id="IPR002547">
    <property type="entry name" value="tRNA-bd_dom"/>
</dbReference>
<dbReference type="InterPro" id="IPR033714">
    <property type="entry name" value="tRNA_bind_bactPheRS"/>
</dbReference>
<dbReference type="InterPro" id="IPR005147">
    <property type="entry name" value="tRNA_synthase_B5-dom"/>
</dbReference>
<dbReference type="NCBIfam" id="TIGR00472">
    <property type="entry name" value="pheT_bact"/>
    <property type="match status" value="1"/>
</dbReference>
<dbReference type="PANTHER" id="PTHR10947:SF0">
    <property type="entry name" value="PHENYLALANINE--TRNA LIGASE BETA SUBUNIT"/>
    <property type="match status" value="1"/>
</dbReference>
<dbReference type="PANTHER" id="PTHR10947">
    <property type="entry name" value="PHENYLALANYL-TRNA SYNTHETASE BETA CHAIN AND LEUCINE-RICH REPEAT-CONTAINING PROTEIN 47"/>
    <property type="match status" value="1"/>
</dbReference>
<dbReference type="Pfam" id="PF03483">
    <property type="entry name" value="B3_4"/>
    <property type="match status" value="1"/>
</dbReference>
<dbReference type="Pfam" id="PF03484">
    <property type="entry name" value="B5"/>
    <property type="match status" value="1"/>
</dbReference>
<dbReference type="Pfam" id="PF03147">
    <property type="entry name" value="FDX-ACB"/>
    <property type="match status" value="1"/>
</dbReference>
<dbReference type="Pfam" id="PF01588">
    <property type="entry name" value="tRNA_bind"/>
    <property type="match status" value="1"/>
</dbReference>
<dbReference type="Pfam" id="PF17759">
    <property type="entry name" value="tRNA_synthFbeta"/>
    <property type="match status" value="1"/>
</dbReference>
<dbReference type="SMART" id="SM00873">
    <property type="entry name" value="B3_4"/>
    <property type="match status" value="1"/>
</dbReference>
<dbReference type="SMART" id="SM00874">
    <property type="entry name" value="B5"/>
    <property type="match status" value="1"/>
</dbReference>
<dbReference type="SMART" id="SM00896">
    <property type="entry name" value="FDX-ACB"/>
    <property type="match status" value="1"/>
</dbReference>
<dbReference type="SUPFAM" id="SSF54991">
    <property type="entry name" value="Anticodon-binding domain of PheRS"/>
    <property type="match status" value="1"/>
</dbReference>
<dbReference type="SUPFAM" id="SSF55681">
    <property type="entry name" value="Class II aaRS and biotin synthetases"/>
    <property type="match status" value="1"/>
</dbReference>
<dbReference type="SUPFAM" id="SSF50249">
    <property type="entry name" value="Nucleic acid-binding proteins"/>
    <property type="match status" value="1"/>
</dbReference>
<dbReference type="SUPFAM" id="SSF56037">
    <property type="entry name" value="PheT/TilS domain"/>
    <property type="match status" value="1"/>
</dbReference>
<dbReference type="SUPFAM" id="SSF46955">
    <property type="entry name" value="Putative DNA-binding domain"/>
    <property type="match status" value="1"/>
</dbReference>
<dbReference type="PROSITE" id="PS51483">
    <property type="entry name" value="B5"/>
    <property type="match status" value="1"/>
</dbReference>
<dbReference type="PROSITE" id="PS51447">
    <property type="entry name" value="FDX_ACB"/>
    <property type="match status" value="1"/>
</dbReference>
<dbReference type="PROSITE" id="PS50886">
    <property type="entry name" value="TRBD"/>
    <property type="match status" value="1"/>
</dbReference>
<evidence type="ECO:0000255" key="1">
    <source>
        <dbReference type="HAMAP-Rule" id="MF_00283"/>
    </source>
</evidence>
<evidence type="ECO:0000305" key="2"/>
<keyword id="KW-0030">Aminoacyl-tRNA synthetase</keyword>
<keyword id="KW-0067">ATP-binding</keyword>
<keyword id="KW-0963">Cytoplasm</keyword>
<keyword id="KW-0436">Ligase</keyword>
<keyword id="KW-0460">Magnesium</keyword>
<keyword id="KW-0479">Metal-binding</keyword>
<keyword id="KW-0547">Nucleotide-binding</keyword>
<keyword id="KW-0648">Protein biosynthesis</keyword>
<keyword id="KW-1185">Reference proteome</keyword>
<keyword id="KW-0694">RNA-binding</keyword>
<keyword id="KW-0820">tRNA-binding</keyword>
<proteinExistence type="inferred from homology"/>
<feature type="chain" id="PRO_0000232797" description="Phenylalanine--tRNA ligase beta subunit">
    <location>
        <begin position="1"/>
        <end position="803"/>
    </location>
</feature>
<feature type="domain" description="tRNA-binding" evidence="1">
    <location>
        <begin position="40"/>
        <end position="150"/>
    </location>
</feature>
<feature type="domain" description="B5" evidence="1">
    <location>
        <begin position="405"/>
        <end position="480"/>
    </location>
</feature>
<feature type="domain" description="FDX-ACB" evidence="1">
    <location>
        <begin position="710"/>
        <end position="803"/>
    </location>
</feature>
<feature type="binding site" evidence="1">
    <location>
        <position position="458"/>
    </location>
    <ligand>
        <name>Mg(2+)</name>
        <dbReference type="ChEBI" id="CHEBI:18420"/>
        <note>shared with alpha subunit</note>
    </ligand>
</feature>
<feature type="binding site" evidence="1">
    <location>
        <position position="468"/>
    </location>
    <ligand>
        <name>Mg(2+)</name>
        <dbReference type="ChEBI" id="CHEBI:18420"/>
        <note>shared with alpha subunit</note>
    </ligand>
</feature>
<protein>
    <recommendedName>
        <fullName evidence="1">Phenylalanine--tRNA ligase beta subunit</fullName>
        <ecNumber evidence="1">6.1.1.20</ecNumber>
    </recommendedName>
    <alternativeName>
        <fullName evidence="1">Phenylalanyl-tRNA synthetase beta subunit</fullName>
        <shortName evidence="1">PheRS</shortName>
    </alternativeName>
</protein>
<gene>
    <name evidence="1" type="primary">pheT</name>
    <name type="ordered locus">Bfl356</name>
</gene>